<name>NUSB_CHLP8</name>
<keyword id="KW-0694">RNA-binding</keyword>
<keyword id="KW-0804">Transcription</keyword>
<keyword id="KW-0889">Transcription antitermination</keyword>
<keyword id="KW-0805">Transcription regulation</keyword>
<sequence>MKTYRRQLREKIIQALYTLELRDVDTDSATNWLLTKEMADDPNAMKFFNHLMKSIIDHREEIDRHIAKHTFNWDMNRIAIIDKNILRMALAEILYCEDIPPKVSINEAIEIAKKFNSTEKSSKFVNGILDAIFNDLKAEGRIQKCGRGLIDHTESKMQKSESNR</sequence>
<feature type="chain" id="PRO_1000092536" description="Transcription antitermination protein NusB">
    <location>
        <begin position="1"/>
        <end position="164"/>
    </location>
</feature>
<proteinExistence type="inferred from homology"/>
<dbReference type="EMBL" id="CP001099">
    <property type="protein sequence ID" value="ACF10905.1"/>
    <property type="molecule type" value="Genomic_DNA"/>
</dbReference>
<dbReference type="RefSeq" id="WP_012501738.1">
    <property type="nucleotide sequence ID" value="NC_011027.1"/>
</dbReference>
<dbReference type="SMR" id="B3QLL5"/>
<dbReference type="STRING" id="517417.Cpar_0483"/>
<dbReference type="KEGG" id="cpc:Cpar_0483"/>
<dbReference type="eggNOG" id="COG0781">
    <property type="taxonomic scope" value="Bacteria"/>
</dbReference>
<dbReference type="HOGENOM" id="CLU_087843_3_0_10"/>
<dbReference type="OrthoDB" id="9787568at2"/>
<dbReference type="Proteomes" id="UP000008811">
    <property type="component" value="Chromosome"/>
</dbReference>
<dbReference type="GO" id="GO:0005829">
    <property type="term" value="C:cytosol"/>
    <property type="evidence" value="ECO:0007669"/>
    <property type="project" value="TreeGrafter"/>
</dbReference>
<dbReference type="GO" id="GO:0003723">
    <property type="term" value="F:RNA binding"/>
    <property type="evidence" value="ECO:0007669"/>
    <property type="project" value="UniProtKB-UniRule"/>
</dbReference>
<dbReference type="GO" id="GO:0006353">
    <property type="term" value="P:DNA-templated transcription termination"/>
    <property type="evidence" value="ECO:0007669"/>
    <property type="project" value="UniProtKB-UniRule"/>
</dbReference>
<dbReference type="GO" id="GO:0031564">
    <property type="term" value="P:transcription antitermination"/>
    <property type="evidence" value="ECO:0007669"/>
    <property type="project" value="UniProtKB-KW"/>
</dbReference>
<dbReference type="CDD" id="cd00619">
    <property type="entry name" value="Terminator_NusB"/>
    <property type="match status" value="1"/>
</dbReference>
<dbReference type="Gene3D" id="1.10.940.10">
    <property type="entry name" value="NusB-like"/>
    <property type="match status" value="1"/>
</dbReference>
<dbReference type="HAMAP" id="MF_00073">
    <property type="entry name" value="NusB"/>
    <property type="match status" value="1"/>
</dbReference>
<dbReference type="InterPro" id="IPR035926">
    <property type="entry name" value="NusB-like_sf"/>
</dbReference>
<dbReference type="InterPro" id="IPR011605">
    <property type="entry name" value="NusB_fam"/>
</dbReference>
<dbReference type="InterPro" id="IPR006027">
    <property type="entry name" value="NusB_RsmB_TIM44"/>
</dbReference>
<dbReference type="NCBIfam" id="TIGR01951">
    <property type="entry name" value="nusB"/>
    <property type="match status" value="1"/>
</dbReference>
<dbReference type="PANTHER" id="PTHR11078:SF3">
    <property type="entry name" value="ANTITERMINATION NUSB DOMAIN-CONTAINING PROTEIN"/>
    <property type="match status" value="1"/>
</dbReference>
<dbReference type="PANTHER" id="PTHR11078">
    <property type="entry name" value="N UTILIZATION SUBSTANCE PROTEIN B-RELATED"/>
    <property type="match status" value="1"/>
</dbReference>
<dbReference type="Pfam" id="PF01029">
    <property type="entry name" value="NusB"/>
    <property type="match status" value="1"/>
</dbReference>
<dbReference type="SUPFAM" id="SSF48013">
    <property type="entry name" value="NusB-like"/>
    <property type="match status" value="1"/>
</dbReference>
<gene>
    <name evidence="1" type="primary">nusB</name>
    <name type="ordered locus">Cpar_0483</name>
</gene>
<evidence type="ECO:0000255" key="1">
    <source>
        <dbReference type="HAMAP-Rule" id="MF_00073"/>
    </source>
</evidence>
<organism>
    <name type="scientific">Chlorobaculum parvum (strain DSM 263 / NCIMB 8327)</name>
    <name type="common">Chlorobium vibrioforme subsp. thiosulfatophilum</name>
    <dbReference type="NCBI Taxonomy" id="517417"/>
    <lineage>
        <taxon>Bacteria</taxon>
        <taxon>Pseudomonadati</taxon>
        <taxon>Chlorobiota</taxon>
        <taxon>Chlorobiia</taxon>
        <taxon>Chlorobiales</taxon>
        <taxon>Chlorobiaceae</taxon>
        <taxon>Chlorobaculum</taxon>
    </lineage>
</organism>
<comment type="function">
    <text evidence="1">Involved in transcription antitermination. Required for transcription of ribosomal RNA (rRNA) genes. Binds specifically to the boxA antiterminator sequence of the ribosomal RNA (rrn) operons.</text>
</comment>
<comment type="similarity">
    <text evidence="1">Belongs to the NusB family.</text>
</comment>
<reference key="1">
    <citation type="submission" date="2008-06" db="EMBL/GenBank/DDBJ databases">
        <title>Complete sequence of Chlorobaculum parvum NCIB 8327.</title>
        <authorList>
            <consortium name="US DOE Joint Genome Institute"/>
            <person name="Lucas S."/>
            <person name="Copeland A."/>
            <person name="Lapidus A."/>
            <person name="Glavina del Rio T."/>
            <person name="Dalin E."/>
            <person name="Tice H."/>
            <person name="Bruce D."/>
            <person name="Goodwin L."/>
            <person name="Pitluck S."/>
            <person name="Schmutz J."/>
            <person name="Larimer F."/>
            <person name="Land M."/>
            <person name="Hauser L."/>
            <person name="Kyrpides N."/>
            <person name="Mikhailova N."/>
            <person name="Zhao F."/>
            <person name="Li T."/>
            <person name="Liu Z."/>
            <person name="Overmann J."/>
            <person name="Bryant D.A."/>
            <person name="Richardson P."/>
        </authorList>
    </citation>
    <scope>NUCLEOTIDE SEQUENCE [LARGE SCALE GENOMIC DNA]</scope>
    <source>
        <strain>DSM 263 / NCIMB 8327</strain>
    </source>
</reference>
<protein>
    <recommendedName>
        <fullName evidence="1">Transcription antitermination protein NusB</fullName>
    </recommendedName>
    <alternativeName>
        <fullName evidence="1">Antitermination factor NusB</fullName>
    </alternativeName>
</protein>
<accession>B3QLL5</accession>